<dbReference type="EC" id="4.1.1.79" evidence="1"/>
<dbReference type="EMBL" id="AE000666">
    <property type="protein sequence ID" value="AAB85695.1"/>
    <property type="molecule type" value="Genomic_DNA"/>
</dbReference>
<dbReference type="PIR" id="A69028">
    <property type="entry name" value="A69028"/>
</dbReference>
<dbReference type="RefSeq" id="WP_010876830.1">
    <property type="nucleotide sequence ID" value="NC_000916.1"/>
</dbReference>
<dbReference type="SMR" id="O27274"/>
<dbReference type="STRING" id="187420.MTH_1206"/>
<dbReference type="PaxDb" id="187420-MTH_1206"/>
<dbReference type="EnsemblBacteria" id="AAB85695">
    <property type="protein sequence ID" value="AAB85695"/>
    <property type="gene ID" value="MTH_1206"/>
</dbReference>
<dbReference type="GeneID" id="1471614"/>
<dbReference type="GeneID" id="77401734"/>
<dbReference type="KEGG" id="mth:MTH_1206"/>
<dbReference type="PATRIC" id="fig|187420.15.peg.1184"/>
<dbReference type="HOGENOM" id="CLU_113594_0_0_2"/>
<dbReference type="InParanoid" id="O27274"/>
<dbReference type="UniPathway" id="UPA00355">
    <property type="reaction ID" value="UER00472"/>
</dbReference>
<dbReference type="Proteomes" id="UP000005223">
    <property type="component" value="Chromosome"/>
</dbReference>
<dbReference type="GO" id="GO:0050545">
    <property type="term" value="F:sulfopyruvate decarboxylase activity"/>
    <property type="evidence" value="ECO:0000250"/>
    <property type="project" value="UniProtKB"/>
</dbReference>
<dbReference type="GO" id="GO:0030976">
    <property type="term" value="F:thiamine pyrophosphate binding"/>
    <property type="evidence" value="ECO:0007669"/>
    <property type="project" value="InterPro"/>
</dbReference>
<dbReference type="GO" id="GO:0019295">
    <property type="term" value="P:coenzyme M biosynthetic process"/>
    <property type="evidence" value="ECO:0000250"/>
    <property type="project" value="UniProtKB"/>
</dbReference>
<dbReference type="CDD" id="cd07035">
    <property type="entry name" value="TPP_PYR_POX_like"/>
    <property type="match status" value="1"/>
</dbReference>
<dbReference type="FunFam" id="3.40.50.970:FF:000039">
    <property type="entry name" value="Indolepyruvate oxidoreductase subunit IorA"/>
    <property type="match status" value="1"/>
</dbReference>
<dbReference type="Gene3D" id="3.40.50.970">
    <property type="match status" value="1"/>
</dbReference>
<dbReference type="InterPro" id="IPR022502">
    <property type="entry name" value="Sulfopyruvate_deCO2ase_alpha"/>
</dbReference>
<dbReference type="InterPro" id="IPR029061">
    <property type="entry name" value="THDP-binding"/>
</dbReference>
<dbReference type="InterPro" id="IPR012001">
    <property type="entry name" value="Thiamin_PyroP_enz_TPP-bd_dom"/>
</dbReference>
<dbReference type="InterPro" id="IPR051818">
    <property type="entry name" value="TPP_dependent_decarboxylase"/>
</dbReference>
<dbReference type="NCBIfam" id="TIGR03845">
    <property type="entry name" value="sulfopyru_alph"/>
    <property type="match status" value="1"/>
</dbReference>
<dbReference type="PANTHER" id="PTHR42818:SF1">
    <property type="entry name" value="SULFOPYRUVATE DECARBOXYLASE"/>
    <property type="match status" value="1"/>
</dbReference>
<dbReference type="PANTHER" id="PTHR42818">
    <property type="entry name" value="SULFOPYRUVATE DECARBOXYLASE SUBUNIT ALPHA"/>
    <property type="match status" value="1"/>
</dbReference>
<dbReference type="Pfam" id="PF02776">
    <property type="entry name" value="TPP_enzyme_N"/>
    <property type="match status" value="1"/>
</dbReference>
<dbReference type="SUPFAM" id="SSF52518">
    <property type="entry name" value="Thiamin diphosphate-binding fold (THDP-binding)"/>
    <property type="match status" value="1"/>
</dbReference>
<sequence>MKVDSSEAVYAGMKDAGIDFAVSVPCVNLRTVLEMVDADPAIMHVPVTREEEGFGVAAGAHMAGKTTAILMQNSGLGNSVNVLASLYSLYHIPITMIVSHRGTEGEFMEAQVPMGRATGDILRILEIPFRTPRSPAEARESIGELTDISLRTSKAVAVLLDVSYW</sequence>
<feature type="chain" id="PRO_0000090838" description="Sulfopyruvate decarboxylase subunit alpha">
    <location>
        <begin position="1"/>
        <end position="165"/>
    </location>
</feature>
<comment type="function">
    <text evidence="1">Involved in the biosynthesis of the coenzyme M (2-mercaptoethanesulfonic acid). Catalyzes the decarboxylation of sulfopyruvate to sulfoacetaldehyde.</text>
</comment>
<comment type="catalytic activity">
    <reaction evidence="1">
        <text>3-sulfopyruvate + H(+) = sulfoacetaldehyde + CO2</text>
        <dbReference type="Rhea" id="RHEA:20948"/>
        <dbReference type="ChEBI" id="CHEBI:15378"/>
        <dbReference type="ChEBI" id="CHEBI:16526"/>
        <dbReference type="ChEBI" id="CHEBI:57940"/>
        <dbReference type="ChEBI" id="CHEBI:58246"/>
        <dbReference type="EC" id="4.1.1.79"/>
    </reaction>
</comment>
<comment type="pathway">
    <text evidence="1">Cofactor biosynthesis; coenzyme M biosynthesis; sulfoacetaldehyde from phosphoenolpyruvate and sulfite: step 4/4.</text>
</comment>
<comment type="subunit">
    <text evidence="1">Heterododecamer composed of 6 subunits alpha and 6 subunits beta.</text>
</comment>
<comment type="similarity">
    <text evidence="1">Belongs to the ComD family.</text>
</comment>
<organism>
    <name type="scientific">Methanothermobacter thermautotrophicus (strain ATCC 29096 / DSM 1053 / JCM 10044 / NBRC 100330 / Delta H)</name>
    <name type="common">Methanobacterium thermoautotrophicum</name>
    <dbReference type="NCBI Taxonomy" id="187420"/>
    <lineage>
        <taxon>Archaea</taxon>
        <taxon>Methanobacteriati</taxon>
        <taxon>Methanobacteriota</taxon>
        <taxon>Methanomada group</taxon>
        <taxon>Methanobacteria</taxon>
        <taxon>Methanobacteriales</taxon>
        <taxon>Methanobacteriaceae</taxon>
        <taxon>Methanothermobacter</taxon>
    </lineage>
</organism>
<keyword id="KW-0174">Coenzyme M biosynthesis</keyword>
<keyword id="KW-0210">Decarboxylase</keyword>
<keyword id="KW-0456">Lyase</keyword>
<keyword id="KW-1185">Reference proteome</keyword>
<protein>
    <recommendedName>
        <fullName evidence="1">Sulfopyruvate decarboxylase subunit alpha</fullName>
        <ecNumber evidence="1">4.1.1.79</ecNumber>
    </recommendedName>
</protein>
<name>COMD_METTH</name>
<gene>
    <name evidence="1" type="primary">comD</name>
    <name type="ordered locus">MTH_1206</name>
</gene>
<evidence type="ECO:0000250" key="1">
    <source>
        <dbReference type="UniProtKB" id="P58415"/>
    </source>
</evidence>
<proteinExistence type="inferred from homology"/>
<reference key="1">
    <citation type="journal article" date="1997" name="J. Bacteriol.">
        <title>Complete genome sequence of Methanobacterium thermoautotrophicum deltaH: functional analysis and comparative genomics.</title>
        <authorList>
            <person name="Smith D.R."/>
            <person name="Doucette-Stamm L.A."/>
            <person name="Deloughery C."/>
            <person name="Lee H.-M."/>
            <person name="Dubois J."/>
            <person name="Aldredge T."/>
            <person name="Bashirzadeh R."/>
            <person name="Blakely D."/>
            <person name="Cook R."/>
            <person name="Gilbert K."/>
            <person name="Harrison D."/>
            <person name="Hoang L."/>
            <person name="Keagle P."/>
            <person name="Lumm W."/>
            <person name="Pothier B."/>
            <person name="Qiu D."/>
            <person name="Spadafora R."/>
            <person name="Vicare R."/>
            <person name="Wang Y."/>
            <person name="Wierzbowski J."/>
            <person name="Gibson R."/>
            <person name="Jiwani N."/>
            <person name="Caruso A."/>
            <person name="Bush D."/>
            <person name="Safer H."/>
            <person name="Patwell D."/>
            <person name="Prabhakar S."/>
            <person name="McDougall S."/>
            <person name="Shimer G."/>
            <person name="Goyal A."/>
            <person name="Pietrovski S."/>
            <person name="Church G.M."/>
            <person name="Daniels C.J."/>
            <person name="Mao J.-I."/>
            <person name="Rice P."/>
            <person name="Noelling J."/>
            <person name="Reeve J.N."/>
        </authorList>
    </citation>
    <scope>NUCLEOTIDE SEQUENCE [LARGE SCALE GENOMIC DNA]</scope>
    <source>
        <strain>ATCC 29096 / DSM 1053 / JCM 10044 / NBRC 100330 / Delta H</strain>
    </source>
</reference>
<accession>O27274</accession>